<sequence>MVSKPLFSLLLLTVALVVFQTGTLVNAEDSEPSSSTRKPLVKIVKGKKLCDKGWECKGWSEYCCNHTISDFFETYQFENLFSKRNSPVAHAVGFWDYRSFITAAAEYQPLGFGTAGEKLQGMKEVAAFLGHVGSKTSCGYGVATGGPLAWGLCYNKEMSPDQLYCDDYYKLTYPCTPGVSYHGRGALPVYWNYNYGQTGEALKVDLLSHPEYLENNATLAFQAAIWRWMTPPKKHLPSAHDVFVGKWKPTKNDTAAKRTPGFGATINVLYGDQICNSGFDNDEMNNIVSHYLYYLDLIGVGREEAGPHEKLSCADQEPFSSSSSAPPSSGSSS</sequence>
<organism>
    <name type="scientific">Arabidopsis thaliana</name>
    <name type="common">Mouse-ear cress</name>
    <dbReference type="NCBI Taxonomy" id="3702"/>
    <lineage>
        <taxon>Eukaryota</taxon>
        <taxon>Viridiplantae</taxon>
        <taxon>Streptophyta</taxon>
        <taxon>Embryophyta</taxon>
        <taxon>Tracheophyta</taxon>
        <taxon>Spermatophyta</taxon>
        <taxon>Magnoliopsida</taxon>
        <taxon>eudicotyledons</taxon>
        <taxon>Gunneridae</taxon>
        <taxon>Pentapetalae</taxon>
        <taxon>rosids</taxon>
        <taxon>malvids</taxon>
        <taxon>Brassicales</taxon>
        <taxon>Brassicaceae</taxon>
        <taxon>Camelineae</taxon>
        <taxon>Arabidopsis</taxon>
    </lineage>
</organism>
<protein>
    <recommendedName>
        <fullName>Chitinase-like protein 2</fullName>
        <shortName>AtCTL2</shortName>
    </recommendedName>
</protein>
<gene>
    <name type="primary">CTL2</name>
    <name type="ordered locus">At3g16920</name>
    <name type="ORF">K14A17.4</name>
</gene>
<accession>Q9LSP9</accession>
<accession>F4J3Y0</accession>
<feature type="signal peptide" evidence="2">
    <location>
        <begin position="1"/>
        <end position="27"/>
    </location>
</feature>
<feature type="chain" id="PRO_0000394284" description="Chitinase-like protein 2">
    <location>
        <begin position="28"/>
        <end position="333"/>
    </location>
</feature>
<feature type="region of interest" description="Disordered" evidence="3">
    <location>
        <begin position="307"/>
        <end position="333"/>
    </location>
</feature>
<feature type="compositionally biased region" description="Low complexity" evidence="3">
    <location>
        <begin position="320"/>
        <end position="333"/>
    </location>
</feature>
<feature type="glycosylation site" description="N-linked (GlcNAc...) asparagine" evidence="2">
    <location>
        <position position="65"/>
    </location>
</feature>
<feature type="glycosylation site" description="N-linked (GlcNAc...) asparagine" evidence="2">
    <location>
        <position position="216"/>
    </location>
</feature>
<feature type="glycosylation site" description="N-linked (GlcNAc...) asparagine" evidence="2">
    <location>
        <position position="252"/>
    </location>
</feature>
<feature type="disulfide bond" evidence="1">
    <location>
        <begin position="50"/>
        <end position="56"/>
    </location>
</feature>
<feature type="disulfide bond" evidence="1">
    <location>
        <begin position="165"/>
        <end position="175"/>
    </location>
</feature>
<feature type="disulfide bond" evidence="1">
    <location>
        <begin position="275"/>
        <end position="313"/>
    </location>
</feature>
<proteinExistence type="evidence at transcript level"/>
<name>CTL2_ARATH</name>
<evidence type="ECO:0000250" key="1"/>
<evidence type="ECO:0000255" key="2"/>
<evidence type="ECO:0000256" key="3">
    <source>
        <dbReference type="SAM" id="MobiDB-lite"/>
    </source>
</evidence>
<evidence type="ECO:0000269" key="4">
    <source>
    </source>
</evidence>
<evidence type="ECO:0000305" key="5"/>
<reference key="1">
    <citation type="journal article" date="2000" name="DNA Res.">
        <title>Structural analysis of Arabidopsis thaliana chromosome 3. I. Sequence features of the regions of 4,504,864 bp covered by sixty P1 and TAC clones.</title>
        <authorList>
            <person name="Sato S."/>
            <person name="Nakamura Y."/>
            <person name="Kaneko T."/>
            <person name="Katoh T."/>
            <person name="Asamizu E."/>
            <person name="Tabata S."/>
        </authorList>
    </citation>
    <scope>NUCLEOTIDE SEQUENCE [LARGE SCALE GENOMIC DNA]</scope>
    <source>
        <strain>cv. Columbia</strain>
    </source>
</reference>
<reference key="2">
    <citation type="journal article" date="2017" name="Plant J.">
        <title>Araport11: a complete reannotation of the Arabidopsis thaliana reference genome.</title>
        <authorList>
            <person name="Cheng C.Y."/>
            <person name="Krishnakumar V."/>
            <person name="Chan A.P."/>
            <person name="Thibaud-Nissen F."/>
            <person name="Schobel S."/>
            <person name="Town C.D."/>
        </authorList>
    </citation>
    <scope>GENOME REANNOTATION</scope>
    <source>
        <strain>cv. Columbia</strain>
    </source>
</reference>
<reference key="3">
    <citation type="journal article" date="2003" name="Science">
        <title>Empirical analysis of transcriptional activity in the Arabidopsis genome.</title>
        <authorList>
            <person name="Yamada K."/>
            <person name="Lim J."/>
            <person name="Dale J.M."/>
            <person name="Chen H."/>
            <person name="Shinn P."/>
            <person name="Palm C.J."/>
            <person name="Southwick A.M."/>
            <person name="Wu H.C."/>
            <person name="Kim C.J."/>
            <person name="Nguyen M."/>
            <person name="Pham P.K."/>
            <person name="Cheuk R.F."/>
            <person name="Karlin-Newmann G."/>
            <person name="Liu S.X."/>
            <person name="Lam B."/>
            <person name="Sakano H."/>
            <person name="Wu T."/>
            <person name="Yu G."/>
            <person name="Miranda M."/>
            <person name="Quach H.L."/>
            <person name="Tripp M."/>
            <person name="Chang C.H."/>
            <person name="Lee J.M."/>
            <person name="Toriumi M.J."/>
            <person name="Chan M.M."/>
            <person name="Tang C.C."/>
            <person name="Onodera C.S."/>
            <person name="Deng J.M."/>
            <person name="Akiyama K."/>
            <person name="Ansari Y."/>
            <person name="Arakawa T."/>
            <person name="Banh J."/>
            <person name="Banno F."/>
            <person name="Bowser L."/>
            <person name="Brooks S.Y."/>
            <person name="Carninci P."/>
            <person name="Chao Q."/>
            <person name="Choy N."/>
            <person name="Enju A."/>
            <person name="Goldsmith A.D."/>
            <person name="Gurjal M."/>
            <person name="Hansen N.F."/>
            <person name="Hayashizaki Y."/>
            <person name="Johnson-Hopson C."/>
            <person name="Hsuan V.W."/>
            <person name="Iida K."/>
            <person name="Karnes M."/>
            <person name="Khan S."/>
            <person name="Koesema E."/>
            <person name="Ishida J."/>
            <person name="Jiang P.X."/>
            <person name="Jones T."/>
            <person name="Kawai J."/>
            <person name="Kamiya A."/>
            <person name="Meyers C."/>
            <person name="Nakajima M."/>
            <person name="Narusaka M."/>
            <person name="Seki M."/>
            <person name="Sakurai T."/>
            <person name="Satou M."/>
            <person name="Tamse R."/>
            <person name="Vaysberg M."/>
            <person name="Wallender E.K."/>
            <person name="Wong C."/>
            <person name="Yamamura Y."/>
            <person name="Yuan S."/>
            <person name="Shinozaki K."/>
            <person name="Davis R.W."/>
            <person name="Theologis A."/>
            <person name="Ecker J.R."/>
        </authorList>
    </citation>
    <scope>NUCLEOTIDE SEQUENCE [LARGE SCALE MRNA]</scope>
    <source>
        <strain>cv. Columbia</strain>
    </source>
</reference>
<reference key="4">
    <citation type="submission" date="2006-07" db="EMBL/GenBank/DDBJ databases">
        <title>Large-scale analysis of RIKEN Arabidopsis full-length (RAFL) cDNAs.</title>
        <authorList>
            <person name="Totoki Y."/>
            <person name="Seki M."/>
            <person name="Ishida J."/>
            <person name="Nakajima M."/>
            <person name="Enju A."/>
            <person name="Kamiya A."/>
            <person name="Narusaka M."/>
            <person name="Shin-i T."/>
            <person name="Nakagawa M."/>
            <person name="Sakamoto N."/>
            <person name="Oishi K."/>
            <person name="Kohara Y."/>
            <person name="Kobayashi M."/>
            <person name="Toyoda A."/>
            <person name="Sakaki Y."/>
            <person name="Sakurai T."/>
            <person name="Iida K."/>
            <person name="Akiyama K."/>
            <person name="Satou M."/>
            <person name="Toyoda T."/>
            <person name="Konagaya A."/>
            <person name="Carninci P."/>
            <person name="Kawai J."/>
            <person name="Hayashizaki Y."/>
            <person name="Shinozaki K."/>
        </authorList>
    </citation>
    <scope>NUCLEOTIDE SEQUENCE [LARGE SCALE MRNA]</scope>
    <source>
        <strain>cv. Columbia</strain>
    </source>
</reference>
<reference key="5">
    <citation type="journal article" date="2010" name="J. Plant Physiol.">
        <title>Mutation of the chitinase-like protein-encoding AtCTL2 gene enhances lignin accumulation in dark-grown Arabidopsis seedlings.</title>
        <authorList>
            <person name="Hossain M.A."/>
            <person name="Noh H.N."/>
            <person name="Kim K.I."/>
            <person name="Koh E.J."/>
            <person name="Wi S.G."/>
            <person name="Bae H.J."/>
            <person name="Lee H."/>
            <person name="Hong S.W."/>
        </authorList>
    </citation>
    <scope>FUNCTION</scope>
    <scope>DISRUPTION PHENOTYPE</scope>
    <scope>TISSUE SPECIFICITY</scope>
</reference>
<dbReference type="EMBL" id="AB026636">
    <property type="protein sequence ID" value="BAA94976.1"/>
    <property type="molecule type" value="Genomic_DNA"/>
</dbReference>
<dbReference type="EMBL" id="CP002686">
    <property type="protein sequence ID" value="AEE75884.2"/>
    <property type="molecule type" value="Genomic_DNA"/>
</dbReference>
<dbReference type="EMBL" id="AF412071">
    <property type="protein sequence ID" value="AAL06524.1"/>
    <property type="molecule type" value="mRNA"/>
</dbReference>
<dbReference type="EMBL" id="AY090261">
    <property type="protein sequence ID" value="AAL90922.1"/>
    <property type="molecule type" value="mRNA"/>
</dbReference>
<dbReference type="EMBL" id="AK226317">
    <property type="protein sequence ID" value="BAE98469.1"/>
    <property type="molecule type" value="mRNA"/>
</dbReference>
<dbReference type="RefSeq" id="NP_001319573.1">
    <property type="nucleotide sequence ID" value="NM_001338267.1"/>
</dbReference>
<dbReference type="SMR" id="Q9LSP9"/>
<dbReference type="FunCoup" id="Q9LSP9">
    <property type="interactions" value="51"/>
</dbReference>
<dbReference type="STRING" id="3702.Q9LSP9"/>
<dbReference type="CAZy" id="GH19">
    <property type="family name" value="Glycoside Hydrolase Family 19"/>
</dbReference>
<dbReference type="GlyCosmos" id="Q9LSP9">
    <property type="glycosylation" value="3 sites, No reported glycans"/>
</dbReference>
<dbReference type="GlyGen" id="Q9LSP9">
    <property type="glycosylation" value="3 sites"/>
</dbReference>
<dbReference type="PaxDb" id="3702-AT3G16920.1"/>
<dbReference type="ProteomicsDB" id="222633"/>
<dbReference type="EnsemblPlants" id="AT3G16920.1">
    <property type="protein sequence ID" value="AT3G16920.1"/>
    <property type="gene ID" value="AT3G16920"/>
</dbReference>
<dbReference type="GeneID" id="820947"/>
<dbReference type="Gramene" id="AT3G16920.1">
    <property type="protein sequence ID" value="AT3G16920.1"/>
    <property type="gene ID" value="AT3G16920"/>
</dbReference>
<dbReference type="KEGG" id="ath:AT3G16920"/>
<dbReference type="Araport" id="AT3G16920"/>
<dbReference type="TAIR" id="AT3G16920">
    <property type="gene designation" value="CTL2"/>
</dbReference>
<dbReference type="eggNOG" id="KOG4742">
    <property type="taxonomic scope" value="Eukaryota"/>
</dbReference>
<dbReference type="HOGENOM" id="CLU_045506_2_0_1"/>
<dbReference type="InParanoid" id="Q9LSP9"/>
<dbReference type="OMA" id="MTPPEKH"/>
<dbReference type="OrthoDB" id="5985073at2759"/>
<dbReference type="PhylomeDB" id="Q9LSP9"/>
<dbReference type="PRO" id="PR:Q9LSP9"/>
<dbReference type="Proteomes" id="UP000006548">
    <property type="component" value="Chromosome 3"/>
</dbReference>
<dbReference type="ExpressionAtlas" id="Q9LSP9">
    <property type="expression patterns" value="baseline and differential"/>
</dbReference>
<dbReference type="GO" id="GO:0005576">
    <property type="term" value="C:extracellular region"/>
    <property type="evidence" value="ECO:0007669"/>
    <property type="project" value="UniProtKB-SubCell"/>
</dbReference>
<dbReference type="GO" id="GO:0005975">
    <property type="term" value="P:carbohydrate metabolic process"/>
    <property type="evidence" value="ECO:0007669"/>
    <property type="project" value="InterPro"/>
</dbReference>
<dbReference type="GO" id="GO:0016998">
    <property type="term" value="P:cell wall macromolecule catabolic process"/>
    <property type="evidence" value="ECO:0007669"/>
    <property type="project" value="InterPro"/>
</dbReference>
<dbReference type="GO" id="GO:0006032">
    <property type="term" value="P:chitin catabolic process"/>
    <property type="evidence" value="ECO:0007669"/>
    <property type="project" value="InterPro"/>
</dbReference>
<dbReference type="CDD" id="cd00325">
    <property type="entry name" value="chitinase_GH19"/>
    <property type="match status" value="1"/>
</dbReference>
<dbReference type="FunFam" id="3.30.20.10:FF:000001">
    <property type="entry name" value="Endochitinase (Chitinase)"/>
    <property type="match status" value="1"/>
</dbReference>
<dbReference type="Gene3D" id="1.10.530.10">
    <property type="match status" value="1"/>
</dbReference>
<dbReference type="Gene3D" id="3.30.20.10">
    <property type="entry name" value="Endochitinase, domain 2"/>
    <property type="match status" value="1"/>
</dbReference>
<dbReference type="InterPro" id="IPR016283">
    <property type="entry name" value="Glyco_hydro_19"/>
</dbReference>
<dbReference type="InterPro" id="IPR000726">
    <property type="entry name" value="Glyco_hydro_19_cat"/>
</dbReference>
<dbReference type="InterPro" id="IPR023346">
    <property type="entry name" value="Lysozyme-like_dom_sf"/>
</dbReference>
<dbReference type="PANTHER" id="PTHR22595:SF176">
    <property type="entry name" value="CHITINASE-LIKE PROTEIN 2"/>
    <property type="match status" value="1"/>
</dbReference>
<dbReference type="PANTHER" id="PTHR22595">
    <property type="entry name" value="CHITINASE-RELATED"/>
    <property type="match status" value="1"/>
</dbReference>
<dbReference type="Pfam" id="PF00182">
    <property type="entry name" value="Glyco_hydro_19"/>
    <property type="match status" value="1"/>
</dbReference>
<dbReference type="PIRSF" id="PIRSF001060">
    <property type="entry name" value="Endochitinase"/>
    <property type="match status" value="1"/>
</dbReference>
<dbReference type="SUPFAM" id="SSF53955">
    <property type="entry name" value="Lysozyme-like"/>
    <property type="match status" value="1"/>
</dbReference>
<comment type="function">
    <text evidence="1 4">No chitinase activity (By similarity). Required for proper cell wall biosynthesis in etiolated seedlings. Prevents lignin accumulation in hypocotyls.</text>
</comment>
<comment type="subcellular location">
    <subcellularLocation>
        <location evidence="5">Secreted</location>
    </subcellularLocation>
</comment>
<comment type="tissue specificity">
    <text evidence="4">Mostly expressed in stems, especially in xylem and interfascicular fibers.</text>
</comment>
<comment type="disruption phenotype">
    <text evidence="4">Ectopic accumulation of lignin in etiolated hypocotyls.</text>
</comment>
<comment type="similarity">
    <text evidence="5">Belongs to the glycosyl hydrolase 19 family.</text>
</comment>
<keyword id="KW-1015">Disulfide bond</keyword>
<keyword id="KW-0325">Glycoprotein</keyword>
<keyword id="KW-1185">Reference proteome</keyword>
<keyword id="KW-0964">Secreted</keyword>
<keyword id="KW-0732">Signal</keyword>